<sequence>MELKLLQDNGQVGAGVAASPEVFGRDYNEALVHQIVVAYQANARSGNRKQKDREEVKHTTKKPWRQKGTGRARAGMSSSPLWRGGGRIFPNSPEENFSQKVNKKMFRAGMRSIYSQLAREGRINVVDGFTVDAPKTKLLADKFKAMGLDSVLIITDSLDENLYLASRNLPHVAVVEPRQADPLSLVHYKKVLVTKAAVAQIEELLK</sequence>
<comment type="function">
    <text evidence="1">One of the primary rRNA binding proteins, this protein initially binds near the 5'-end of the 23S rRNA. It is important during the early stages of 50S assembly. It makes multiple contacts with different domains of the 23S rRNA in the assembled 50S subunit and ribosome.</text>
</comment>
<comment type="function">
    <text evidence="1">Forms part of the polypeptide exit tunnel.</text>
</comment>
<comment type="subunit">
    <text evidence="1">Part of the 50S ribosomal subunit.</text>
</comment>
<comment type="similarity">
    <text evidence="1">Belongs to the universal ribosomal protein uL4 family.</text>
</comment>
<feature type="chain" id="PRO_0000242422" description="Large ribosomal subunit protein uL4">
    <location>
        <begin position="1"/>
        <end position="206"/>
    </location>
</feature>
<feature type="region of interest" description="Disordered" evidence="2">
    <location>
        <begin position="43"/>
        <end position="78"/>
    </location>
</feature>
<feature type="compositionally biased region" description="Basic and acidic residues" evidence="2">
    <location>
        <begin position="49"/>
        <end position="58"/>
    </location>
</feature>
<feature type="compositionally biased region" description="Basic residues" evidence="2">
    <location>
        <begin position="59"/>
        <end position="70"/>
    </location>
</feature>
<protein>
    <recommendedName>
        <fullName evidence="1">Large ribosomal subunit protein uL4</fullName>
    </recommendedName>
    <alternativeName>
        <fullName evidence="3">50S ribosomal protein L4</fullName>
    </alternativeName>
</protein>
<organism>
    <name type="scientific">Cupriavidus pinatubonensis (strain JMP 134 / LMG 1197)</name>
    <name type="common">Cupriavidus necator (strain JMP 134)</name>
    <dbReference type="NCBI Taxonomy" id="264198"/>
    <lineage>
        <taxon>Bacteria</taxon>
        <taxon>Pseudomonadati</taxon>
        <taxon>Pseudomonadota</taxon>
        <taxon>Betaproteobacteria</taxon>
        <taxon>Burkholderiales</taxon>
        <taxon>Burkholderiaceae</taxon>
        <taxon>Cupriavidus</taxon>
    </lineage>
</organism>
<accession>Q46WE5</accession>
<name>RL4_CUPPJ</name>
<reference key="1">
    <citation type="journal article" date="2010" name="PLoS ONE">
        <title>The complete multipartite genome sequence of Cupriavidus necator JMP134, a versatile pollutant degrader.</title>
        <authorList>
            <person name="Lykidis A."/>
            <person name="Perez-Pantoja D."/>
            <person name="Ledger T."/>
            <person name="Mavromatis K."/>
            <person name="Anderson I.J."/>
            <person name="Ivanova N.N."/>
            <person name="Hooper S.D."/>
            <person name="Lapidus A."/>
            <person name="Lucas S."/>
            <person name="Gonzalez B."/>
            <person name="Kyrpides N.C."/>
        </authorList>
    </citation>
    <scope>NUCLEOTIDE SEQUENCE [LARGE SCALE GENOMIC DNA]</scope>
    <source>
        <strain>JMP134 / LMG 1197</strain>
    </source>
</reference>
<keyword id="KW-0687">Ribonucleoprotein</keyword>
<keyword id="KW-0689">Ribosomal protein</keyword>
<keyword id="KW-0694">RNA-binding</keyword>
<keyword id="KW-0699">rRNA-binding</keyword>
<dbReference type="EMBL" id="CP000090">
    <property type="protein sequence ID" value="AAZ62538.1"/>
    <property type="molecule type" value="Genomic_DNA"/>
</dbReference>
<dbReference type="SMR" id="Q46WE5"/>
<dbReference type="STRING" id="264198.Reut_A3178"/>
<dbReference type="KEGG" id="reu:Reut_A3178"/>
<dbReference type="eggNOG" id="COG0088">
    <property type="taxonomic scope" value="Bacteria"/>
</dbReference>
<dbReference type="HOGENOM" id="CLU_041575_5_2_4"/>
<dbReference type="OrthoDB" id="9803201at2"/>
<dbReference type="GO" id="GO:1990904">
    <property type="term" value="C:ribonucleoprotein complex"/>
    <property type="evidence" value="ECO:0007669"/>
    <property type="project" value="UniProtKB-KW"/>
</dbReference>
<dbReference type="GO" id="GO:0005840">
    <property type="term" value="C:ribosome"/>
    <property type="evidence" value="ECO:0007669"/>
    <property type="project" value="UniProtKB-KW"/>
</dbReference>
<dbReference type="GO" id="GO:0019843">
    <property type="term" value="F:rRNA binding"/>
    <property type="evidence" value="ECO:0007669"/>
    <property type="project" value="UniProtKB-UniRule"/>
</dbReference>
<dbReference type="GO" id="GO:0003735">
    <property type="term" value="F:structural constituent of ribosome"/>
    <property type="evidence" value="ECO:0007669"/>
    <property type="project" value="InterPro"/>
</dbReference>
<dbReference type="GO" id="GO:0006412">
    <property type="term" value="P:translation"/>
    <property type="evidence" value="ECO:0007669"/>
    <property type="project" value="UniProtKB-UniRule"/>
</dbReference>
<dbReference type="Gene3D" id="3.40.1370.10">
    <property type="match status" value="1"/>
</dbReference>
<dbReference type="HAMAP" id="MF_01328_B">
    <property type="entry name" value="Ribosomal_uL4_B"/>
    <property type="match status" value="1"/>
</dbReference>
<dbReference type="InterPro" id="IPR002136">
    <property type="entry name" value="Ribosomal_uL4"/>
</dbReference>
<dbReference type="InterPro" id="IPR013005">
    <property type="entry name" value="Ribosomal_uL4-like"/>
</dbReference>
<dbReference type="InterPro" id="IPR023574">
    <property type="entry name" value="Ribosomal_uL4_dom_sf"/>
</dbReference>
<dbReference type="NCBIfam" id="TIGR03953">
    <property type="entry name" value="rplD_bact"/>
    <property type="match status" value="1"/>
</dbReference>
<dbReference type="PANTHER" id="PTHR10746">
    <property type="entry name" value="50S RIBOSOMAL PROTEIN L4"/>
    <property type="match status" value="1"/>
</dbReference>
<dbReference type="PANTHER" id="PTHR10746:SF6">
    <property type="entry name" value="LARGE RIBOSOMAL SUBUNIT PROTEIN UL4M"/>
    <property type="match status" value="1"/>
</dbReference>
<dbReference type="Pfam" id="PF00573">
    <property type="entry name" value="Ribosomal_L4"/>
    <property type="match status" value="1"/>
</dbReference>
<dbReference type="SUPFAM" id="SSF52166">
    <property type="entry name" value="Ribosomal protein L4"/>
    <property type="match status" value="1"/>
</dbReference>
<evidence type="ECO:0000255" key="1">
    <source>
        <dbReference type="HAMAP-Rule" id="MF_01328"/>
    </source>
</evidence>
<evidence type="ECO:0000256" key="2">
    <source>
        <dbReference type="SAM" id="MobiDB-lite"/>
    </source>
</evidence>
<evidence type="ECO:0000305" key="3"/>
<gene>
    <name evidence="1" type="primary">rplD</name>
    <name type="ordered locus">Reut_A3178</name>
</gene>
<proteinExistence type="inferred from homology"/>